<keyword id="KW-1003">Cell membrane</keyword>
<keyword id="KW-0966">Cell projection</keyword>
<keyword id="KW-0968">Cytoplasmic vesicle</keyword>
<keyword id="KW-0967">Endosome</keyword>
<keyword id="KW-0325">Glycoprotein</keyword>
<keyword id="KW-0472">Membrane</keyword>
<keyword id="KW-1185">Reference proteome</keyword>
<keyword id="KW-0732">Signal</keyword>
<keyword id="KW-0770">Synapse</keyword>
<keyword id="KW-0812">Transmembrane</keyword>
<keyword id="KW-1133">Transmembrane helix</keyword>
<comment type="function">
    <text evidence="1">Plays a role in short-term synaptic plasticity in a subset of GABAergic neurons in the brain.</text>
</comment>
<comment type="subcellular location">
    <subcellularLocation>
        <location evidence="1">Cytoplasmic vesicle membrane</location>
        <topology evidence="1">Single-pass type I membrane protein</topology>
    </subcellularLocation>
    <subcellularLocation>
        <location evidence="1">Cell membrane</location>
        <topology evidence="1">Single-pass type I membrane protein</topology>
    </subcellularLocation>
    <subcellularLocation>
        <location evidence="1">Cell projection</location>
        <location evidence="1">Dendrite</location>
    </subcellularLocation>
    <subcellularLocation>
        <location evidence="1">Cytoplasmic vesicle</location>
        <location evidence="1">Secretory vesicle</location>
        <location evidence="1">Synaptic vesicle membrane</location>
        <topology evidence="1">Single-pass type I membrane protein</topology>
    </subcellularLocation>
    <subcellularLocation>
        <location evidence="1">Cell projection</location>
        <location evidence="1">Growth cone membrane</location>
        <topology evidence="1">Single-pass type I membrane protein</topology>
    </subcellularLocation>
    <subcellularLocation>
        <location evidence="1">Early endosome membrane</location>
        <topology evidence="1">Single-pass type I membrane protein</topology>
    </subcellularLocation>
    <subcellularLocation>
        <location evidence="1">Recycling endosome</location>
    </subcellularLocation>
    <subcellularLocation>
        <location evidence="2">Endoplasmic reticulum-Golgi intermediate compartment membrane</location>
        <topology evidence="1">Single-pass type I membrane protein</topology>
    </subcellularLocation>
    <subcellularLocation>
        <location evidence="2">Endosome membrane</location>
        <topology evidence="1">Single-pass type I membrane protein</topology>
    </subcellularLocation>
    <text evidence="1 2">Recycles from the vesicles of the endocytic recycling compartment (ERC) to the plasma membrane (By similarity). Colocalizes with UNC93B1 in large endosomal intracellular vesicles (By similarity). Accumulates in the endoplasmic reticulum-Golgi intermediate compartment (ERGIC) before its disappearance upon activation by CpG dinucleotides (By similarity). Associates with cortical membranes (By similarity). Localizes mostly in cytoplasmic vesicles of neuronal cell body. Localizes to synaptic vesicles in a subset of GABAergic neurons (By similarity).</text>
</comment>
<comment type="PTM">
    <text evidence="1">Glycosylated.</text>
</comment>
<comment type="similarity">
    <text evidence="4">Belongs to the LAMP family.</text>
</comment>
<name>LAMP5_BOVIN</name>
<reference key="1">
    <citation type="submission" date="2006-09" db="EMBL/GenBank/DDBJ databases">
        <authorList>
            <consortium name="NIH - Mammalian Gene Collection (MGC) project"/>
        </authorList>
    </citation>
    <scope>NUCLEOTIDE SEQUENCE [LARGE SCALE MRNA]</scope>
    <source>
        <strain>Hereford</strain>
        <tissue>Brain cortex</tissue>
    </source>
</reference>
<evidence type="ECO:0000250" key="1">
    <source>
        <dbReference type="UniProtKB" id="Q9D387"/>
    </source>
</evidence>
<evidence type="ECO:0000250" key="2">
    <source>
        <dbReference type="UniProtKB" id="Q9UJQ1"/>
    </source>
</evidence>
<evidence type="ECO:0000255" key="3"/>
<evidence type="ECO:0000305" key="4"/>
<proteinExistence type="evidence at transcript level"/>
<protein>
    <recommendedName>
        <fullName>Lysosome-associated membrane glycoprotein 5</fullName>
    </recommendedName>
    <alternativeName>
        <fullName>Lysosome-associated membrane protein 5</fullName>
        <shortName>LAMP-5</shortName>
    </alternativeName>
</protein>
<accession>A4FV27</accession>
<dbReference type="EMBL" id="BC123658">
    <property type="protein sequence ID" value="AAI23659.1"/>
    <property type="molecule type" value="mRNA"/>
</dbReference>
<dbReference type="RefSeq" id="NP_001076887.1">
    <property type="nucleotide sequence ID" value="NM_001083418.1"/>
</dbReference>
<dbReference type="RefSeq" id="XP_010809319.1">
    <property type="nucleotide sequence ID" value="XM_010811017.3"/>
</dbReference>
<dbReference type="RefSeq" id="XP_059748536.1">
    <property type="nucleotide sequence ID" value="XM_059892553.1"/>
</dbReference>
<dbReference type="SMR" id="A4FV27"/>
<dbReference type="FunCoup" id="A4FV27">
    <property type="interactions" value="664"/>
</dbReference>
<dbReference type="STRING" id="9913.ENSBTAP00000010487"/>
<dbReference type="GlyCosmos" id="A4FV27">
    <property type="glycosylation" value="2 sites, No reported glycans"/>
</dbReference>
<dbReference type="GlyGen" id="A4FV27">
    <property type="glycosylation" value="2 sites"/>
</dbReference>
<dbReference type="PaxDb" id="9913-ENSBTAP00000010487"/>
<dbReference type="GeneID" id="513094"/>
<dbReference type="KEGG" id="bta:513094"/>
<dbReference type="CTD" id="24141"/>
<dbReference type="VEuPathDB" id="HostDB:ENSBTAG00000007977"/>
<dbReference type="eggNOG" id="KOG4818">
    <property type="taxonomic scope" value="Eukaryota"/>
</dbReference>
<dbReference type="HOGENOM" id="CLU_090529_0_0_1"/>
<dbReference type="InParanoid" id="A4FV27"/>
<dbReference type="OMA" id="CSQVRMA"/>
<dbReference type="OrthoDB" id="6248302at2759"/>
<dbReference type="TreeFam" id="TF330776"/>
<dbReference type="Proteomes" id="UP000009136">
    <property type="component" value="Chromosome 13"/>
</dbReference>
<dbReference type="Bgee" id="ENSBTAG00000007977">
    <property type="expression patterns" value="Expressed in occipital lobe and 32 other cell types or tissues"/>
</dbReference>
<dbReference type="GO" id="GO:0030659">
    <property type="term" value="C:cytoplasmic vesicle membrane"/>
    <property type="evidence" value="ECO:0000250"/>
    <property type="project" value="UniProtKB"/>
</dbReference>
<dbReference type="GO" id="GO:0032590">
    <property type="term" value="C:dendrite membrane"/>
    <property type="evidence" value="ECO:0000250"/>
    <property type="project" value="UniProtKB"/>
</dbReference>
<dbReference type="GO" id="GO:0031901">
    <property type="term" value="C:early endosome membrane"/>
    <property type="evidence" value="ECO:0000250"/>
    <property type="project" value="UniProtKB"/>
</dbReference>
<dbReference type="GO" id="GO:0033116">
    <property type="term" value="C:endoplasmic reticulum-Golgi intermediate compartment membrane"/>
    <property type="evidence" value="ECO:0000250"/>
    <property type="project" value="UniProtKB"/>
</dbReference>
<dbReference type="GO" id="GO:0010008">
    <property type="term" value="C:endosome membrane"/>
    <property type="evidence" value="ECO:0000250"/>
    <property type="project" value="UniProtKB"/>
</dbReference>
<dbReference type="GO" id="GO:0098982">
    <property type="term" value="C:GABA-ergic synapse"/>
    <property type="evidence" value="ECO:0007669"/>
    <property type="project" value="Ensembl"/>
</dbReference>
<dbReference type="GO" id="GO:0032584">
    <property type="term" value="C:growth cone membrane"/>
    <property type="evidence" value="ECO:0000250"/>
    <property type="project" value="UniProtKB"/>
</dbReference>
<dbReference type="GO" id="GO:0031902">
    <property type="term" value="C:late endosome membrane"/>
    <property type="evidence" value="ECO:0000318"/>
    <property type="project" value="GO_Central"/>
</dbReference>
<dbReference type="GO" id="GO:0005765">
    <property type="term" value="C:lysosomal membrane"/>
    <property type="evidence" value="ECO:0000318"/>
    <property type="project" value="GO_Central"/>
</dbReference>
<dbReference type="GO" id="GO:0005886">
    <property type="term" value="C:plasma membrane"/>
    <property type="evidence" value="ECO:0000250"/>
    <property type="project" value="UniProtKB"/>
</dbReference>
<dbReference type="GO" id="GO:0055038">
    <property type="term" value="C:recycling endosome membrane"/>
    <property type="evidence" value="ECO:0000250"/>
    <property type="project" value="UniProtKB"/>
</dbReference>
<dbReference type="GO" id="GO:0030672">
    <property type="term" value="C:synaptic vesicle membrane"/>
    <property type="evidence" value="ECO:0007669"/>
    <property type="project" value="UniProtKB-SubCell"/>
</dbReference>
<dbReference type="GO" id="GO:0072594">
    <property type="term" value="P:establishment of protein localization to organelle"/>
    <property type="evidence" value="ECO:0000318"/>
    <property type="project" value="GO_Central"/>
</dbReference>
<dbReference type="GO" id="GO:0099171">
    <property type="term" value="P:presynaptic modulation of chemical synaptic transmission"/>
    <property type="evidence" value="ECO:0007669"/>
    <property type="project" value="Ensembl"/>
</dbReference>
<dbReference type="FunFam" id="2.40.160.110:FF:000002">
    <property type="entry name" value="lysosome-associated membrane glycoprotein 5 isoform X1"/>
    <property type="match status" value="1"/>
</dbReference>
<dbReference type="Gene3D" id="2.40.160.110">
    <property type="match status" value="1"/>
</dbReference>
<dbReference type="InterPro" id="IPR048528">
    <property type="entry name" value="Lamp2-like_luminal"/>
</dbReference>
<dbReference type="InterPro" id="IPR002000">
    <property type="entry name" value="Lysosome-assoc_membr_glycop"/>
</dbReference>
<dbReference type="PANTHER" id="PTHR11506">
    <property type="entry name" value="LYSOSOME-ASSOCIATED MEMBRANE GLYCOPROTEIN"/>
    <property type="match status" value="1"/>
</dbReference>
<dbReference type="PANTHER" id="PTHR11506:SF35">
    <property type="entry name" value="LYSOSOME-ASSOCIATED MEMBRANE GLYCOPROTEIN 5"/>
    <property type="match status" value="1"/>
</dbReference>
<dbReference type="Pfam" id="PF01299">
    <property type="entry name" value="Lamp2-like_luminal"/>
    <property type="match status" value="1"/>
</dbReference>
<dbReference type="PROSITE" id="PS00310">
    <property type="entry name" value="LAMP_1"/>
    <property type="match status" value="1"/>
</dbReference>
<organism>
    <name type="scientific">Bos taurus</name>
    <name type="common">Bovine</name>
    <dbReference type="NCBI Taxonomy" id="9913"/>
    <lineage>
        <taxon>Eukaryota</taxon>
        <taxon>Metazoa</taxon>
        <taxon>Chordata</taxon>
        <taxon>Craniata</taxon>
        <taxon>Vertebrata</taxon>
        <taxon>Euteleostomi</taxon>
        <taxon>Mammalia</taxon>
        <taxon>Eutheria</taxon>
        <taxon>Laurasiatheria</taxon>
        <taxon>Artiodactyla</taxon>
        <taxon>Ruminantia</taxon>
        <taxon>Pecora</taxon>
        <taxon>Bovidae</taxon>
        <taxon>Bovinae</taxon>
        <taxon>Bos</taxon>
    </lineage>
</organism>
<gene>
    <name type="primary">LAMP5</name>
</gene>
<sequence length="280" mass="31528">MDLRRRALLGVDGLRVLLMLFHTVTRIMAEQEVENLSGLSTNPEKDIFVVRENGTTCLMAEFAAKFIVPYDVWASNYVDLITEQADISLTRGAEVKGHCGHDESELQVFWVDRAYALKMLFLKESHNTPKGPEATWKLSKVQFVYDSSEKTHFKDAVSAGKHTANSHHLSALVTPAGKSYECQAQQTISLASSDPQKTVTMILSAVHIQPFDIISDFVFSEEHKCPVDEREQLEETLPLILGLILGLVIVVTLVIYHIHHKMTANQVQIPRDRSQYKHMG</sequence>
<feature type="signal peptide" evidence="3">
    <location>
        <begin position="1"/>
        <end position="29"/>
    </location>
</feature>
<feature type="chain" id="PRO_0000360413" description="Lysosome-associated membrane glycoprotein 5">
    <location>
        <begin position="30"/>
        <end position="280"/>
    </location>
</feature>
<feature type="topological domain" description="Extracellular" evidence="3">
    <location>
        <begin position="30"/>
        <end position="235"/>
    </location>
</feature>
<feature type="transmembrane region" description="Helical" evidence="3">
    <location>
        <begin position="236"/>
        <end position="256"/>
    </location>
</feature>
<feature type="topological domain" description="Cytoplasmic" evidence="3">
    <location>
        <begin position="257"/>
        <end position="280"/>
    </location>
</feature>
<feature type="glycosylation site" description="N-linked (GlcNAc...) asparagine" evidence="3">
    <location>
        <position position="35"/>
    </location>
</feature>
<feature type="glycosylation site" description="N-linked (GlcNAc...) asparagine" evidence="3">
    <location>
        <position position="53"/>
    </location>
</feature>